<dbReference type="EC" id="1.3.1.98" evidence="1"/>
<dbReference type="EMBL" id="CP000010">
    <property type="protein sequence ID" value="AAU49185.1"/>
    <property type="molecule type" value="Genomic_DNA"/>
</dbReference>
<dbReference type="RefSeq" id="YP_102191.1">
    <property type="nucleotide sequence ID" value="NC_006348.1"/>
</dbReference>
<dbReference type="SMR" id="Q62M77"/>
<dbReference type="KEGG" id="bma:BMA0374"/>
<dbReference type="PATRIC" id="fig|243160.12.peg.377"/>
<dbReference type="eggNOG" id="COG0812">
    <property type="taxonomic scope" value="Bacteria"/>
</dbReference>
<dbReference type="HOGENOM" id="CLU_035304_0_0_4"/>
<dbReference type="UniPathway" id="UPA00219"/>
<dbReference type="Proteomes" id="UP000006693">
    <property type="component" value="Chromosome 1"/>
</dbReference>
<dbReference type="GO" id="GO:0005829">
    <property type="term" value="C:cytosol"/>
    <property type="evidence" value="ECO:0007669"/>
    <property type="project" value="TreeGrafter"/>
</dbReference>
<dbReference type="GO" id="GO:0071949">
    <property type="term" value="F:FAD binding"/>
    <property type="evidence" value="ECO:0007669"/>
    <property type="project" value="InterPro"/>
</dbReference>
<dbReference type="GO" id="GO:0008762">
    <property type="term" value="F:UDP-N-acetylmuramate dehydrogenase activity"/>
    <property type="evidence" value="ECO:0007669"/>
    <property type="project" value="UniProtKB-UniRule"/>
</dbReference>
<dbReference type="GO" id="GO:0051301">
    <property type="term" value="P:cell division"/>
    <property type="evidence" value="ECO:0007669"/>
    <property type="project" value="UniProtKB-KW"/>
</dbReference>
<dbReference type="GO" id="GO:0071555">
    <property type="term" value="P:cell wall organization"/>
    <property type="evidence" value="ECO:0007669"/>
    <property type="project" value="UniProtKB-KW"/>
</dbReference>
<dbReference type="GO" id="GO:0009252">
    <property type="term" value="P:peptidoglycan biosynthetic process"/>
    <property type="evidence" value="ECO:0007669"/>
    <property type="project" value="UniProtKB-UniRule"/>
</dbReference>
<dbReference type="GO" id="GO:0008360">
    <property type="term" value="P:regulation of cell shape"/>
    <property type="evidence" value="ECO:0007669"/>
    <property type="project" value="UniProtKB-KW"/>
</dbReference>
<dbReference type="Gene3D" id="3.30.465.10">
    <property type="match status" value="1"/>
</dbReference>
<dbReference type="Gene3D" id="3.90.78.10">
    <property type="entry name" value="UDP-N-acetylenolpyruvoylglucosamine reductase, C-terminal domain"/>
    <property type="match status" value="1"/>
</dbReference>
<dbReference type="Gene3D" id="3.30.43.10">
    <property type="entry name" value="Uridine Diphospho-n-acetylenolpyruvylglucosamine Reductase, domain 2"/>
    <property type="match status" value="1"/>
</dbReference>
<dbReference type="HAMAP" id="MF_00037">
    <property type="entry name" value="MurB"/>
    <property type="match status" value="1"/>
</dbReference>
<dbReference type="InterPro" id="IPR016166">
    <property type="entry name" value="FAD-bd_PCMH"/>
</dbReference>
<dbReference type="InterPro" id="IPR036318">
    <property type="entry name" value="FAD-bd_PCMH-like_sf"/>
</dbReference>
<dbReference type="InterPro" id="IPR016167">
    <property type="entry name" value="FAD-bd_PCMH_sub1"/>
</dbReference>
<dbReference type="InterPro" id="IPR016169">
    <property type="entry name" value="FAD-bd_PCMH_sub2"/>
</dbReference>
<dbReference type="InterPro" id="IPR003170">
    <property type="entry name" value="MurB"/>
</dbReference>
<dbReference type="InterPro" id="IPR011601">
    <property type="entry name" value="MurB_C"/>
</dbReference>
<dbReference type="InterPro" id="IPR036635">
    <property type="entry name" value="MurB_C_sf"/>
</dbReference>
<dbReference type="InterPro" id="IPR006094">
    <property type="entry name" value="Oxid_FAD_bind_N"/>
</dbReference>
<dbReference type="NCBIfam" id="TIGR00179">
    <property type="entry name" value="murB"/>
    <property type="match status" value="1"/>
</dbReference>
<dbReference type="NCBIfam" id="NF000755">
    <property type="entry name" value="PRK00046.1"/>
    <property type="match status" value="1"/>
</dbReference>
<dbReference type="PANTHER" id="PTHR21071">
    <property type="entry name" value="UDP-N-ACETYLENOLPYRUVOYLGLUCOSAMINE REDUCTASE"/>
    <property type="match status" value="1"/>
</dbReference>
<dbReference type="PANTHER" id="PTHR21071:SF4">
    <property type="entry name" value="UDP-N-ACETYLENOLPYRUVOYLGLUCOSAMINE REDUCTASE"/>
    <property type="match status" value="1"/>
</dbReference>
<dbReference type="Pfam" id="PF01565">
    <property type="entry name" value="FAD_binding_4"/>
    <property type="match status" value="1"/>
</dbReference>
<dbReference type="Pfam" id="PF02873">
    <property type="entry name" value="MurB_C"/>
    <property type="match status" value="1"/>
</dbReference>
<dbReference type="SUPFAM" id="SSF56176">
    <property type="entry name" value="FAD-binding/transporter-associated domain-like"/>
    <property type="match status" value="1"/>
</dbReference>
<dbReference type="SUPFAM" id="SSF56194">
    <property type="entry name" value="Uridine diphospho-N-Acetylenolpyruvylglucosamine reductase, MurB, C-terminal domain"/>
    <property type="match status" value="1"/>
</dbReference>
<dbReference type="PROSITE" id="PS51387">
    <property type="entry name" value="FAD_PCMH"/>
    <property type="match status" value="1"/>
</dbReference>
<accession>Q62M77</accession>
<proteinExistence type="inferred from homology"/>
<protein>
    <recommendedName>
        <fullName evidence="1">UDP-N-acetylenolpyruvoylglucosamine reductase</fullName>
        <ecNumber evidence="1">1.3.1.98</ecNumber>
    </recommendedName>
    <alternativeName>
        <fullName evidence="1">UDP-N-acetylmuramate dehydrogenase</fullName>
    </alternativeName>
</protein>
<evidence type="ECO:0000255" key="1">
    <source>
        <dbReference type="HAMAP-Rule" id="MF_00037"/>
    </source>
</evidence>
<keyword id="KW-0131">Cell cycle</keyword>
<keyword id="KW-0132">Cell division</keyword>
<keyword id="KW-0133">Cell shape</keyword>
<keyword id="KW-0961">Cell wall biogenesis/degradation</keyword>
<keyword id="KW-0963">Cytoplasm</keyword>
<keyword id="KW-0274">FAD</keyword>
<keyword id="KW-0285">Flavoprotein</keyword>
<keyword id="KW-0521">NADP</keyword>
<keyword id="KW-0560">Oxidoreductase</keyword>
<keyword id="KW-0573">Peptidoglycan synthesis</keyword>
<keyword id="KW-1185">Reference proteome</keyword>
<organism>
    <name type="scientific">Burkholderia mallei (strain ATCC 23344)</name>
    <dbReference type="NCBI Taxonomy" id="243160"/>
    <lineage>
        <taxon>Bacteria</taxon>
        <taxon>Pseudomonadati</taxon>
        <taxon>Pseudomonadota</taxon>
        <taxon>Betaproteobacteria</taxon>
        <taxon>Burkholderiales</taxon>
        <taxon>Burkholderiaceae</taxon>
        <taxon>Burkholderia</taxon>
        <taxon>pseudomallei group</taxon>
    </lineage>
</organism>
<reference key="1">
    <citation type="journal article" date="2004" name="Proc. Natl. Acad. Sci. U.S.A.">
        <title>Structural flexibility in the Burkholderia mallei genome.</title>
        <authorList>
            <person name="Nierman W.C."/>
            <person name="DeShazer D."/>
            <person name="Kim H.S."/>
            <person name="Tettelin H."/>
            <person name="Nelson K.E."/>
            <person name="Feldblyum T.V."/>
            <person name="Ulrich R.L."/>
            <person name="Ronning C.M."/>
            <person name="Brinkac L.M."/>
            <person name="Daugherty S.C."/>
            <person name="Davidsen T.D."/>
            <person name="DeBoy R.T."/>
            <person name="Dimitrov G."/>
            <person name="Dodson R.J."/>
            <person name="Durkin A.S."/>
            <person name="Gwinn M.L."/>
            <person name="Haft D.H."/>
            <person name="Khouri H.M."/>
            <person name="Kolonay J.F."/>
            <person name="Madupu R."/>
            <person name="Mohammoud Y."/>
            <person name="Nelson W.C."/>
            <person name="Radune D."/>
            <person name="Romero C.M."/>
            <person name="Sarria S."/>
            <person name="Selengut J."/>
            <person name="Shamblin C."/>
            <person name="Sullivan S.A."/>
            <person name="White O."/>
            <person name="Yu Y."/>
            <person name="Zafar N."/>
            <person name="Zhou L."/>
            <person name="Fraser C.M."/>
        </authorList>
    </citation>
    <scope>NUCLEOTIDE SEQUENCE [LARGE SCALE GENOMIC DNA]</scope>
    <source>
        <strain>ATCC 23344</strain>
    </source>
</reference>
<comment type="function">
    <text evidence="1">Cell wall formation.</text>
</comment>
<comment type="catalytic activity">
    <reaction evidence="1">
        <text>UDP-N-acetyl-alpha-D-muramate + NADP(+) = UDP-N-acetyl-3-O-(1-carboxyvinyl)-alpha-D-glucosamine + NADPH + H(+)</text>
        <dbReference type="Rhea" id="RHEA:12248"/>
        <dbReference type="ChEBI" id="CHEBI:15378"/>
        <dbReference type="ChEBI" id="CHEBI:57783"/>
        <dbReference type="ChEBI" id="CHEBI:58349"/>
        <dbReference type="ChEBI" id="CHEBI:68483"/>
        <dbReference type="ChEBI" id="CHEBI:70757"/>
        <dbReference type="EC" id="1.3.1.98"/>
    </reaction>
</comment>
<comment type="cofactor">
    <cofactor evidence="1">
        <name>FAD</name>
        <dbReference type="ChEBI" id="CHEBI:57692"/>
    </cofactor>
</comment>
<comment type="pathway">
    <text evidence="1">Cell wall biogenesis; peptidoglycan biosynthesis.</text>
</comment>
<comment type="subcellular location">
    <subcellularLocation>
        <location evidence="1">Cytoplasm</location>
    </subcellularLocation>
</comment>
<comment type="similarity">
    <text evidence="1">Belongs to the MurB family.</text>
</comment>
<feature type="chain" id="PRO_0000224670" description="UDP-N-acetylenolpyruvoylglucosamine reductase">
    <location>
        <begin position="1"/>
        <end position="347"/>
    </location>
</feature>
<feature type="domain" description="FAD-binding PCMH-type" evidence="1">
    <location>
        <begin position="24"/>
        <end position="195"/>
    </location>
</feature>
<feature type="active site" evidence="1">
    <location>
        <position position="171"/>
    </location>
</feature>
<feature type="active site" description="Proton donor" evidence="1">
    <location>
        <position position="247"/>
    </location>
</feature>
<feature type="active site" evidence="1">
    <location>
        <position position="343"/>
    </location>
</feature>
<sequence length="347" mass="37318">MSRPDSAVSLLPDYSLRAHNTFGFDARARVAARIGSPGQFASLARDPRVAGLDRLVLGGGSNVVFTRDFDGLVLLDEIRGRALVREDDGAWYVEAGGGENWHAFVEWTLAEGMPGLENLALIPGTVGAAPIQNIGAYGLEMKEHFASLRAVDLATGELVEFDAARCAFGYRDSFFKRDGRGRFAIVAVTFRLPKAWTPRIGYADVARELAARGIDARAARARDVFDAVVAIRRAKLPDPLALGNAGSFFKNPVIDAQAFAALRAREPDIVSYPQPDGRVKLAAGWLIDRCGWKGRALGAAAVHERQALVLVNLGGASGADVLALAHAIRRDVLGRFGVELEMEPVCL</sequence>
<name>MURB_BURMA</name>
<gene>
    <name evidence="1" type="primary">murB</name>
    <name type="ordered locus">BMA0374</name>
</gene>